<dbReference type="EMBL" id="CP000241">
    <property type="protein sequence ID" value="ABF84558.1"/>
    <property type="molecule type" value="Genomic_DNA"/>
</dbReference>
<dbReference type="RefSeq" id="WP_000790599.1">
    <property type="nucleotide sequence ID" value="NC_008086.1"/>
</dbReference>
<dbReference type="SMR" id="Q1CU14"/>
<dbReference type="KEGG" id="hpa:HPAG1_0491"/>
<dbReference type="HOGENOM" id="CLU_038009_1_0_7"/>
<dbReference type="GO" id="GO:0005829">
    <property type="term" value="C:cytosol"/>
    <property type="evidence" value="ECO:0007669"/>
    <property type="project" value="TreeGrafter"/>
</dbReference>
<dbReference type="GO" id="GO:0005886">
    <property type="term" value="C:plasma membrane"/>
    <property type="evidence" value="ECO:0007669"/>
    <property type="project" value="UniProtKB-SubCell"/>
</dbReference>
<dbReference type="GO" id="GO:0005525">
    <property type="term" value="F:GTP binding"/>
    <property type="evidence" value="ECO:0007669"/>
    <property type="project" value="UniProtKB-UniRule"/>
</dbReference>
<dbReference type="GO" id="GO:0003924">
    <property type="term" value="F:GTPase activity"/>
    <property type="evidence" value="ECO:0007669"/>
    <property type="project" value="UniProtKB-UniRule"/>
</dbReference>
<dbReference type="GO" id="GO:0043024">
    <property type="term" value="F:ribosomal small subunit binding"/>
    <property type="evidence" value="ECO:0007669"/>
    <property type="project" value="TreeGrafter"/>
</dbReference>
<dbReference type="GO" id="GO:0070181">
    <property type="term" value="F:small ribosomal subunit rRNA binding"/>
    <property type="evidence" value="ECO:0007669"/>
    <property type="project" value="UniProtKB-UniRule"/>
</dbReference>
<dbReference type="GO" id="GO:0000028">
    <property type="term" value="P:ribosomal small subunit assembly"/>
    <property type="evidence" value="ECO:0007669"/>
    <property type="project" value="TreeGrafter"/>
</dbReference>
<dbReference type="CDD" id="cd04163">
    <property type="entry name" value="Era"/>
    <property type="match status" value="1"/>
</dbReference>
<dbReference type="CDD" id="cd22534">
    <property type="entry name" value="KH-II_Era"/>
    <property type="match status" value="1"/>
</dbReference>
<dbReference type="Gene3D" id="3.30.300.20">
    <property type="match status" value="1"/>
</dbReference>
<dbReference type="Gene3D" id="3.40.50.300">
    <property type="entry name" value="P-loop containing nucleotide triphosphate hydrolases"/>
    <property type="match status" value="1"/>
</dbReference>
<dbReference type="HAMAP" id="MF_00367">
    <property type="entry name" value="GTPase_Era"/>
    <property type="match status" value="1"/>
</dbReference>
<dbReference type="InterPro" id="IPR030388">
    <property type="entry name" value="G_ERA_dom"/>
</dbReference>
<dbReference type="InterPro" id="IPR006073">
    <property type="entry name" value="GTP-bd"/>
</dbReference>
<dbReference type="InterPro" id="IPR005662">
    <property type="entry name" value="GTPase_Era-like"/>
</dbReference>
<dbReference type="InterPro" id="IPR015946">
    <property type="entry name" value="KH_dom-like_a/b"/>
</dbReference>
<dbReference type="InterPro" id="IPR004044">
    <property type="entry name" value="KH_dom_type_2"/>
</dbReference>
<dbReference type="InterPro" id="IPR009019">
    <property type="entry name" value="KH_sf_prok-type"/>
</dbReference>
<dbReference type="InterPro" id="IPR027417">
    <property type="entry name" value="P-loop_NTPase"/>
</dbReference>
<dbReference type="InterPro" id="IPR005225">
    <property type="entry name" value="Small_GTP-bd"/>
</dbReference>
<dbReference type="NCBIfam" id="TIGR00436">
    <property type="entry name" value="era"/>
    <property type="match status" value="1"/>
</dbReference>
<dbReference type="NCBIfam" id="NF000908">
    <property type="entry name" value="PRK00089.1"/>
    <property type="match status" value="1"/>
</dbReference>
<dbReference type="NCBIfam" id="TIGR00231">
    <property type="entry name" value="small_GTP"/>
    <property type="match status" value="1"/>
</dbReference>
<dbReference type="PANTHER" id="PTHR42698">
    <property type="entry name" value="GTPASE ERA"/>
    <property type="match status" value="1"/>
</dbReference>
<dbReference type="PANTHER" id="PTHR42698:SF1">
    <property type="entry name" value="GTPASE ERA, MITOCHONDRIAL"/>
    <property type="match status" value="1"/>
</dbReference>
<dbReference type="Pfam" id="PF07650">
    <property type="entry name" value="KH_2"/>
    <property type="match status" value="1"/>
</dbReference>
<dbReference type="Pfam" id="PF01926">
    <property type="entry name" value="MMR_HSR1"/>
    <property type="match status" value="1"/>
</dbReference>
<dbReference type="SUPFAM" id="SSF52540">
    <property type="entry name" value="P-loop containing nucleoside triphosphate hydrolases"/>
    <property type="match status" value="1"/>
</dbReference>
<dbReference type="SUPFAM" id="SSF54814">
    <property type="entry name" value="Prokaryotic type KH domain (KH-domain type II)"/>
    <property type="match status" value="1"/>
</dbReference>
<dbReference type="PROSITE" id="PS51713">
    <property type="entry name" value="G_ERA"/>
    <property type="match status" value="1"/>
</dbReference>
<dbReference type="PROSITE" id="PS50823">
    <property type="entry name" value="KH_TYPE_2"/>
    <property type="match status" value="1"/>
</dbReference>
<proteinExistence type="inferred from homology"/>
<comment type="function">
    <text evidence="1">An essential GTPase that binds both GDP and GTP, with rapid nucleotide exchange. Plays a role in 16S rRNA processing and 30S ribosomal subunit biogenesis and possibly also in cell cycle regulation and energy metabolism.</text>
</comment>
<comment type="subunit">
    <text evidence="1">Monomer.</text>
</comment>
<comment type="subcellular location">
    <subcellularLocation>
        <location>Cytoplasm</location>
    </subcellularLocation>
    <subcellularLocation>
        <location evidence="1">Cell inner membrane</location>
        <topology evidence="1">Peripheral membrane protein</topology>
    </subcellularLocation>
</comment>
<comment type="similarity">
    <text evidence="1 2">Belongs to the TRAFAC class TrmE-Era-EngA-EngB-Septin-like GTPase superfamily. Era GTPase family.</text>
</comment>
<accession>Q1CU14</accession>
<reference key="1">
    <citation type="journal article" date="2006" name="Proc. Natl. Acad. Sci. U.S.A.">
        <title>The complete genome sequence of a chronic atrophic gastritis Helicobacter pylori strain: evolution during disease progression.</title>
        <authorList>
            <person name="Oh J.D."/>
            <person name="Kling-Baeckhed H."/>
            <person name="Giannakis M."/>
            <person name="Xu J."/>
            <person name="Fulton R.S."/>
            <person name="Fulton L.A."/>
            <person name="Cordum H.S."/>
            <person name="Wang C."/>
            <person name="Elliott G."/>
            <person name="Edwards J."/>
            <person name="Mardis E.R."/>
            <person name="Engstrand L.G."/>
            <person name="Gordon J.I."/>
        </authorList>
    </citation>
    <scope>NUCLEOTIDE SEQUENCE [LARGE SCALE GENOMIC DNA]</scope>
    <source>
        <strain>HPAG1</strain>
    </source>
</reference>
<organism>
    <name type="scientific">Helicobacter pylori (strain HPAG1)</name>
    <dbReference type="NCBI Taxonomy" id="357544"/>
    <lineage>
        <taxon>Bacteria</taxon>
        <taxon>Pseudomonadati</taxon>
        <taxon>Campylobacterota</taxon>
        <taxon>Epsilonproteobacteria</taxon>
        <taxon>Campylobacterales</taxon>
        <taxon>Helicobacteraceae</taxon>
        <taxon>Helicobacter</taxon>
    </lineage>
</organism>
<name>ERA_HELPH</name>
<evidence type="ECO:0000255" key="1">
    <source>
        <dbReference type="HAMAP-Rule" id="MF_00367"/>
    </source>
</evidence>
<evidence type="ECO:0000255" key="2">
    <source>
        <dbReference type="PROSITE-ProRule" id="PRU01050"/>
    </source>
</evidence>
<keyword id="KW-0997">Cell inner membrane</keyword>
<keyword id="KW-1003">Cell membrane</keyword>
<keyword id="KW-0963">Cytoplasm</keyword>
<keyword id="KW-0342">GTP-binding</keyword>
<keyword id="KW-0472">Membrane</keyword>
<keyword id="KW-0547">Nucleotide-binding</keyword>
<keyword id="KW-0690">Ribosome biogenesis</keyword>
<keyword id="KW-0694">RNA-binding</keyword>
<keyword id="KW-0699">rRNA-binding</keyword>
<sequence>MKNKAGFVALIGKPNAGKSTLLNTLLNAHLALVSHKANATRKLMKCIVPFKDKEGYESQIIFLDTPGLHHQEKLLNQCMLSQALKAMGDAELCVFLASVHDDLKGYEEFLSLCQKPHILALSKIDMATHKQVLQKLQEYQQYNSQFLALVPLSAKKSQNLNALLECISKHLIPSAWLFEKDLMSDEKMRDIYKEIIRESLFDFLSDEIPYESDVVIDKFIEEERIDKVYARIIVEKESQKKIVIGKNGVNIKRIGTSARLKMQEVGEKKVFLNLQVIAQKSWSKEEKSLQKLGYTHQRNRD</sequence>
<feature type="chain" id="PRO_1000079701" description="GTPase Era">
    <location>
        <begin position="1"/>
        <end position="301"/>
    </location>
</feature>
<feature type="domain" description="Era-type G" evidence="2">
    <location>
        <begin position="4"/>
        <end position="173"/>
    </location>
</feature>
<feature type="domain" description="KH type-2" evidence="1">
    <location>
        <begin position="204"/>
        <end position="280"/>
    </location>
</feature>
<feature type="region of interest" description="G1" evidence="2">
    <location>
        <begin position="12"/>
        <end position="19"/>
    </location>
</feature>
<feature type="region of interest" description="G2" evidence="2">
    <location>
        <begin position="38"/>
        <end position="42"/>
    </location>
</feature>
<feature type="region of interest" description="G3" evidence="2">
    <location>
        <begin position="64"/>
        <end position="67"/>
    </location>
</feature>
<feature type="region of interest" description="G4" evidence="2">
    <location>
        <begin position="122"/>
        <end position="125"/>
    </location>
</feature>
<feature type="region of interest" description="G5" evidence="2">
    <location>
        <begin position="152"/>
        <end position="154"/>
    </location>
</feature>
<feature type="binding site" evidence="1">
    <location>
        <begin position="12"/>
        <end position="19"/>
    </location>
    <ligand>
        <name>GTP</name>
        <dbReference type="ChEBI" id="CHEBI:37565"/>
    </ligand>
</feature>
<feature type="binding site" evidence="1">
    <location>
        <begin position="64"/>
        <end position="68"/>
    </location>
    <ligand>
        <name>GTP</name>
        <dbReference type="ChEBI" id="CHEBI:37565"/>
    </ligand>
</feature>
<feature type="binding site" evidence="1">
    <location>
        <begin position="122"/>
        <end position="125"/>
    </location>
    <ligand>
        <name>GTP</name>
        <dbReference type="ChEBI" id="CHEBI:37565"/>
    </ligand>
</feature>
<protein>
    <recommendedName>
        <fullName evidence="1">GTPase Era</fullName>
    </recommendedName>
</protein>
<gene>
    <name evidence="1" type="primary">era</name>
    <name type="ordered locus">HPAG1_0491</name>
</gene>